<comment type="function">
    <text evidence="1">One of the primary rRNA binding proteins, it binds specifically to the 5'-end of 16S ribosomal RNA.</text>
</comment>
<comment type="subunit">
    <text evidence="1">Part of the 30S ribosomal subunit.</text>
</comment>
<comment type="similarity">
    <text evidence="1">Belongs to the universal ribosomal protein uS17 family.</text>
</comment>
<comment type="sequence caution" evidence="2">
    <conflict type="erroneous initiation">
        <sequence resource="EMBL-CDS" id="AAL03535"/>
    </conflict>
</comment>
<feature type="chain" id="PRO_0000128472" description="Small ribosomal subunit protein uS17">
    <location>
        <begin position="1"/>
        <end position="77"/>
    </location>
</feature>
<evidence type="ECO:0000255" key="1">
    <source>
        <dbReference type="HAMAP-Rule" id="MF_01345"/>
    </source>
</evidence>
<evidence type="ECO:0000305" key="2"/>
<accession>Q92GX5</accession>
<dbReference type="EMBL" id="AE006914">
    <property type="protein sequence ID" value="AAL03535.1"/>
    <property type="status" value="ALT_INIT"/>
    <property type="molecule type" value="Genomic_DNA"/>
</dbReference>
<dbReference type="PIR" id="E97824">
    <property type="entry name" value="E97824"/>
</dbReference>
<dbReference type="RefSeq" id="WP_004997812.1">
    <property type="nucleotide sequence ID" value="NC_003103.1"/>
</dbReference>
<dbReference type="SMR" id="Q92GX5"/>
<dbReference type="GeneID" id="95361477"/>
<dbReference type="KEGG" id="rco:RC0997"/>
<dbReference type="HOGENOM" id="CLU_073626_1_1_5"/>
<dbReference type="Proteomes" id="UP000000816">
    <property type="component" value="Chromosome"/>
</dbReference>
<dbReference type="GO" id="GO:0022627">
    <property type="term" value="C:cytosolic small ribosomal subunit"/>
    <property type="evidence" value="ECO:0007669"/>
    <property type="project" value="TreeGrafter"/>
</dbReference>
<dbReference type="GO" id="GO:0019843">
    <property type="term" value="F:rRNA binding"/>
    <property type="evidence" value="ECO:0007669"/>
    <property type="project" value="UniProtKB-UniRule"/>
</dbReference>
<dbReference type="GO" id="GO:0003735">
    <property type="term" value="F:structural constituent of ribosome"/>
    <property type="evidence" value="ECO:0007669"/>
    <property type="project" value="InterPro"/>
</dbReference>
<dbReference type="GO" id="GO:0006412">
    <property type="term" value="P:translation"/>
    <property type="evidence" value="ECO:0007669"/>
    <property type="project" value="UniProtKB-UniRule"/>
</dbReference>
<dbReference type="CDD" id="cd00364">
    <property type="entry name" value="Ribosomal_uS17"/>
    <property type="match status" value="1"/>
</dbReference>
<dbReference type="Gene3D" id="2.40.50.140">
    <property type="entry name" value="Nucleic acid-binding proteins"/>
    <property type="match status" value="1"/>
</dbReference>
<dbReference type="HAMAP" id="MF_01345_B">
    <property type="entry name" value="Ribosomal_uS17_B"/>
    <property type="match status" value="1"/>
</dbReference>
<dbReference type="InterPro" id="IPR012340">
    <property type="entry name" value="NA-bd_OB-fold"/>
</dbReference>
<dbReference type="InterPro" id="IPR000266">
    <property type="entry name" value="Ribosomal_uS17"/>
</dbReference>
<dbReference type="InterPro" id="IPR019984">
    <property type="entry name" value="Ribosomal_uS17_bact/chlr"/>
</dbReference>
<dbReference type="InterPro" id="IPR019979">
    <property type="entry name" value="Ribosomal_uS17_CS"/>
</dbReference>
<dbReference type="NCBIfam" id="NF004123">
    <property type="entry name" value="PRK05610.1"/>
    <property type="match status" value="1"/>
</dbReference>
<dbReference type="NCBIfam" id="TIGR03635">
    <property type="entry name" value="uS17_bact"/>
    <property type="match status" value="1"/>
</dbReference>
<dbReference type="PANTHER" id="PTHR10744">
    <property type="entry name" value="40S RIBOSOMAL PROTEIN S11 FAMILY MEMBER"/>
    <property type="match status" value="1"/>
</dbReference>
<dbReference type="PANTHER" id="PTHR10744:SF1">
    <property type="entry name" value="SMALL RIBOSOMAL SUBUNIT PROTEIN US17M"/>
    <property type="match status" value="1"/>
</dbReference>
<dbReference type="Pfam" id="PF00366">
    <property type="entry name" value="Ribosomal_S17"/>
    <property type="match status" value="1"/>
</dbReference>
<dbReference type="PRINTS" id="PR00973">
    <property type="entry name" value="RIBOSOMALS17"/>
</dbReference>
<dbReference type="SUPFAM" id="SSF50249">
    <property type="entry name" value="Nucleic acid-binding proteins"/>
    <property type="match status" value="1"/>
</dbReference>
<dbReference type="PROSITE" id="PS00056">
    <property type="entry name" value="RIBOSOMAL_S17"/>
    <property type="match status" value="1"/>
</dbReference>
<proteinExistence type="inferred from homology"/>
<sequence>MPKRVLQGVVISSKADKTVTVKVERKFKHPIYKKFVKVSKKYAAHDSENKYQEGDKVSIIESRPISKTKTWVVVNGE</sequence>
<gene>
    <name evidence="1" type="primary">rpsQ</name>
    <name type="ordered locus">RC0997</name>
</gene>
<protein>
    <recommendedName>
        <fullName evidence="1">Small ribosomal subunit protein uS17</fullName>
    </recommendedName>
    <alternativeName>
        <fullName evidence="2">30S ribosomal protein S17</fullName>
    </alternativeName>
</protein>
<name>RS17_RICCN</name>
<reference key="1">
    <citation type="journal article" date="2001" name="Science">
        <title>Mechanisms of evolution in Rickettsia conorii and R. prowazekii.</title>
        <authorList>
            <person name="Ogata H."/>
            <person name="Audic S."/>
            <person name="Renesto-Audiffren P."/>
            <person name="Fournier P.-E."/>
            <person name="Barbe V."/>
            <person name="Samson D."/>
            <person name="Roux V."/>
            <person name="Cossart P."/>
            <person name="Weissenbach J."/>
            <person name="Claverie J.-M."/>
            <person name="Raoult D."/>
        </authorList>
    </citation>
    <scope>NUCLEOTIDE SEQUENCE [LARGE SCALE GENOMIC DNA]</scope>
    <source>
        <strain>ATCC VR-613 / Malish 7</strain>
    </source>
</reference>
<organism>
    <name type="scientific">Rickettsia conorii (strain ATCC VR-613 / Malish 7)</name>
    <dbReference type="NCBI Taxonomy" id="272944"/>
    <lineage>
        <taxon>Bacteria</taxon>
        <taxon>Pseudomonadati</taxon>
        <taxon>Pseudomonadota</taxon>
        <taxon>Alphaproteobacteria</taxon>
        <taxon>Rickettsiales</taxon>
        <taxon>Rickettsiaceae</taxon>
        <taxon>Rickettsieae</taxon>
        <taxon>Rickettsia</taxon>
        <taxon>spotted fever group</taxon>
    </lineage>
</organism>
<keyword id="KW-0687">Ribonucleoprotein</keyword>
<keyword id="KW-0689">Ribosomal protein</keyword>
<keyword id="KW-0694">RNA-binding</keyword>
<keyword id="KW-0699">rRNA-binding</keyword>